<protein>
    <recommendedName>
        <fullName>Actin-17</fullName>
        <ecNumber evidence="2">3.6.4.-</ecNumber>
    </recommendedName>
    <alternativeName>
        <fullName>Actin-2-sub 2</fullName>
    </alternativeName>
</protein>
<name>ACT17_DICDI</name>
<comment type="function">
    <text evidence="1">Actins are highly conserved proteins that are involved in various types of cell motility and are ubiquitously expressed in all eukaryotic cells. Multiple isoforms are involved in various cellular functions such as cytoskeleton structure, cell mobility, chromosome movement and muscle contraction (By similarity).</text>
</comment>
<comment type="catalytic activity">
    <reaction evidence="2">
        <text>ATP + H2O = ADP + phosphate + H(+)</text>
        <dbReference type="Rhea" id="RHEA:13065"/>
        <dbReference type="ChEBI" id="CHEBI:15377"/>
        <dbReference type="ChEBI" id="CHEBI:15378"/>
        <dbReference type="ChEBI" id="CHEBI:30616"/>
        <dbReference type="ChEBI" id="CHEBI:43474"/>
        <dbReference type="ChEBI" id="CHEBI:456216"/>
    </reaction>
</comment>
<comment type="subcellular location">
    <subcellularLocation>
        <location evidence="1">Cytoplasm</location>
        <location evidence="1">Cytoskeleton</location>
    </subcellularLocation>
</comment>
<comment type="similarity">
    <text evidence="3">Belongs to the actin family.</text>
</comment>
<gene>
    <name type="primary">act17</name>
    <name type="synonym">act2-2</name>
    <name type="ORF">DDB_G0274131</name>
</gene>
<reference key="1">
    <citation type="journal article" date="2002" name="Nature">
        <title>Sequence and analysis of chromosome 2 of Dictyostelium discoideum.</title>
        <authorList>
            <person name="Gloeckner G."/>
            <person name="Eichinger L."/>
            <person name="Szafranski K."/>
            <person name="Pachebat J.A."/>
            <person name="Bankier A.T."/>
            <person name="Dear P.H."/>
            <person name="Lehmann R."/>
            <person name="Baumgart C."/>
            <person name="Parra G."/>
            <person name="Abril J.F."/>
            <person name="Guigo R."/>
            <person name="Kumpf K."/>
            <person name="Tunggal B."/>
            <person name="Cox E.C."/>
            <person name="Quail M.A."/>
            <person name="Platzer M."/>
            <person name="Rosenthal A."/>
            <person name="Noegel A.A."/>
        </authorList>
    </citation>
    <scope>NUCLEOTIDE SEQUENCE [LARGE SCALE GENOMIC DNA]</scope>
    <source>
        <strain>AX4</strain>
    </source>
</reference>
<reference key="2">
    <citation type="journal article" date="2005" name="Nature">
        <title>The genome of the social amoeba Dictyostelium discoideum.</title>
        <authorList>
            <person name="Eichinger L."/>
            <person name="Pachebat J.A."/>
            <person name="Gloeckner G."/>
            <person name="Rajandream M.A."/>
            <person name="Sucgang R."/>
            <person name="Berriman M."/>
            <person name="Song J."/>
            <person name="Olsen R."/>
            <person name="Szafranski K."/>
            <person name="Xu Q."/>
            <person name="Tunggal B."/>
            <person name="Kummerfeld S."/>
            <person name="Madera M."/>
            <person name="Konfortov B.A."/>
            <person name="Rivero F."/>
            <person name="Bankier A.T."/>
            <person name="Lehmann R."/>
            <person name="Hamlin N."/>
            <person name="Davies R."/>
            <person name="Gaudet P."/>
            <person name="Fey P."/>
            <person name="Pilcher K."/>
            <person name="Chen G."/>
            <person name="Saunders D."/>
            <person name="Sodergren E.J."/>
            <person name="Davis P."/>
            <person name="Kerhornou A."/>
            <person name="Nie X."/>
            <person name="Hall N."/>
            <person name="Anjard C."/>
            <person name="Hemphill L."/>
            <person name="Bason N."/>
            <person name="Farbrother P."/>
            <person name="Desany B."/>
            <person name="Just E."/>
            <person name="Morio T."/>
            <person name="Rost R."/>
            <person name="Churcher C.M."/>
            <person name="Cooper J."/>
            <person name="Haydock S."/>
            <person name="van Driessche N."/>
            <person name="Cronin A."/>
            <person name="Goodhead I."/>
            <person name="Muzny D.M."/>
            <person name="Mourier T."/>
            <person name="Pain A."/>
            <person name="Lu M."/>
            <person name="Harper D."/>
            <person name="Lindsay R."/>
            <person name="Hauser H."/>
            <person name="James K.D."/>
            <person name="Quiles M."/>
            <person name="Madan Babu M."/>
            <person name="Saito T."/>
            <person name="Buchrieser C."/>
            <person name="Wardroper A."/>
            <person name="Felder M."/>
            <person name="Thangavelu M."/>
            <person name="Johnson D."/>
            <person name="Knights A."/>
            <person name="Loulseged H."/>
            <person name="Mungall K.L."/>
            <person name="Oliver K."/>
            <person name="Price C."/>
            <person name="Quail M.A."/>
            <person name="Urushihara H."/>
            <person name="Hernandez J."/>
            <person name="Rabbinowitsch E."/>
            <person name="Steffen D."/>
            <person name="Sanders M."/>
            <person name="Ma J."/>
            <person name="Kohara Y."/>
            <person name="Sharp S."/>
            <person name="Simmonds M.N."/>
            <person name="Spiegler S."/>
            <person name="Tivey A."/>
            <person name="Sugano S."/>
            <person name="White B."/>
            <person name="Walker D."/>
            <person name="Woodward J.R."/>
            <person name="Winckler T."/>
            <person name="Tanaka Y."/>
            <person name="Shaulsky G."/>
            <person name="Schleicher M."/>
            <person name="Weinstock G.M."/>
            <person name="Rosenthal A."/>
            <person name="Cox E.C."/>
            <person name="Chisholm R.L."/>
            <person name="Gibbs R.A."/>
            <person name="Loomis W.F."/>
            <person name="Platzer M."/>
            <person name="Kay R.R."/>
            <person name="Williams J.G."/>
            <person name="Dear P.H."/>
            <person name="Noegel A.A."/>
            <person name="Barrell B.G."/>
            <person name="Kuspa A."/>
        </authorList>
    </citation>
    <scope>NUCLEOTIDE SEQUENCE [LARGE SCALE GENOMIC DNA]</scope>
    <source>
        <strain>AX4</strain>
    </source>
</reference>
<reference key="3">
    <citation type="journal article" date="1979" name="Proc. Natl. Acad. Sci. U.S.A.">
        <title>Unusual nucleotide sequences at the 5' end of actin genes in Dictyostelium discoideum.</title>
        <authorList>
            <person name="Firtel R.A."/>
            <person name="Timm R."/>
            <person name="Kimmel A.R."/>
            <person name="McKeown M."/>
        </authorList>
    </citation>
    <scope>NUCLEOTIDE SEQUENCE [GENOMIC DNA] OF 1-41</scope>
</reference>
<reference key="4">
    <citation type="journal article" date="1981" name="J. Mol. Biol.">
        <title>Evidence for sub-families of actin genes in Dictyostelium as determined by comparisons of 3' end sequences.</title>
        <authorList>
            <person name="McKeown M."/>
            <person name="Firtel R.A."/>
        </authorList>
    </citation>
    <scope>NUCLEOTIDE SEQUENCE [GENOMIC DNA] OF 320-374</scope>
    <source>
        <strain>AX3</strain>
    </source>
</reference>
<dbReference type="EC" id="3.6.4.-" evidence="2"/>
<dbReference type="EMBL" id="AAFI02000012">
    <property type="protein sequence ID" value="EAL69958.1"/>
    <property type="molecule type" value="Genomic_DNA"/>
</dbReference>
<dbReference type="EMBL" id="J01268">
    <property type="protein sequence ID" value="AAR23116.1"/>
    <property type="molecule type" value="Genomic_DNA"/>
</dbReference>
<dbReference type="EMBL" id="K02955">
    <property type="protein sequence ID" value="AAR23117.1"/>
    <property type="molecule type" value="Genomic_DNA"/>
</dbReference>
<dbReference type="RefSeq" id="XP_644247.1">
    <property type="nucleotide sequence ID" value="XM_639155.1"/>
</dbReference>
<dbReference type="SMR" id="Q554S6"/>
<dbReference type="FunCoup" id="Q554S6">
    <property type="interactions" value="8"/>
</dbReference>
<dbReference type="STRING" id="44689.Q554S6"/>
<dbReference type="PaxDb" id="44689-DDB0185125"/>
<dbReference type="EnsemblProtists" id="EAL69958">
    <property type="protein sequence ID" value="EAL69958"/>
    <property type="gene ID" value="DDB_G0274131"/>
</dbReference>
<dbReference type="GeneID" id="8619675"/>
<dbReference type="KEGG" id="ddi:DDB_G0274131"/>
<dbReference type="dictyBase" id="DDB_G0274131">
    <property type="gene designation" value="act17"/>
</dbReference>
<dbReference type="VEuPathDB" id="AmoebaDB:DDB_G0274131"/>
<dbReference type="eggNOG" id="KOG0676">
    <property type="taxonomic scope" value="Eukaryota"/>
</dbReference>
<dbReference type="HOGENOM" id="CLU_027965_0_2_1"/>
<dbReference type="InParanoid" id="Q554S6"/>
<dbReference type="OMA" id="EGHSINH"/>
<dbReference type="PhylomeDB" id="Q554S6"/>
<dbReference type="PRO" id="PR:Q554S6"/>
<dbReference type="Proteomes" id="UP000002195">
    <property type="component" value="Chromosome 2"/>
</dbReference>
<dbReference type="GO" id="GO:0015629">
    <property type="term" value="C:actin cytoskeleton"/>
    <property type="evidence" value="ECO:0000250"/>
    <property type="project" value="dictyBase"/>
</dbReference>
<dbReference type="GO" id="GO:0005737">
    <property type="term" value="C:cytoplasm"/>
    <property type="evidence" value="ECO:0007669"/>
    <property type="project" value="UniProtKB-KW"/>
</dbReference>
<dbReference type="GO" id="GO:0005524">
    <property type="term" value="F:ATP binding"/>
    <property type="evidence" value="ECO:0007669"/>
    <property type="project" value="UniProtKB-KW"/>
</dbReference>
<dbReference type="GO" id="GO:0016787">
    <property type="term" value="F:hydrolase activity"/>
    <property type="evidence" value="ECO:0007669"/>
    <property type="project" value="UniProtKB-KW"/>
</dbReference>
<dbReference type="GO" id="GO:0017022">
    <property type="term" value="F:myosin binding"/>
    <property type="evidence" value="ECO:0000250"/>
    <property type="project" value="dictyBase"/>
</dbReference>
<dbReference type="GO" id="GO:0005200">
    <property type="term" value="F:structural constituent of cytoskeleton"/>
    <property type="evidence" value="ECO:0000250"/>
    <property type="project" value="dictyBase"/>
</dbReference>
<dbReference type="GO" id="GO:0006909">
    <property type="term" value="P:phagocytosis"/>
    <property type="evidence" value="ECO:0000250"/>
    <property type="project" value="dictyBase"/>
</dbReference>
<dbReference type="FunFam" id="3.30.420.40:FF:000131">
    <property type="entry name" value="Actin, alpha skeletal muscle"/>
    <property type="match status" value="1"/>
</dbReference>
<dbReference type="FunFam" id="3.30.420.40:FF:000291">
    <property type="entry name" value="Actin, alpha skeletal muscle"/>
    <property type="match status" value="1"/>
</dbReference>
<dbReference type="FunFam" id="3.90.640.10:FF:000047">
    <property type="entry name" value="Actin, alpha skeletal muscle"/>
    <property type="match status" value="1"/>
</dbReference>
<dbReference type="FunFam" id="3.30.420.40:FF:000058">
    <property type="entry name" value="Putative actin-related protein 5"/>
    <property type="match status" value="1"/>
</dbReference>
<dbReference type="Gene3D" id="3.30.420.40">
    <property type="match status" value="2"/>
</dbReference>
<dbReference type="Gene3D" id="3.90.640.10">
    <property type="entry name" value="Actin, Chain A, domain 4"/>
    <property type="match status" value="1"/>
</dbReference>
<dbReference type="InterPro" id="IPR004000">
    <property type="entry name" value="Actin"/>
</dbReference>
<dbReference type="InterPro" id="IPR004001">
    <property type="entry name" value="Actin_CS"/>
</dbReference>
<dbReference type="InterPro" id="IPR043129">
    <property type="entry name" value="ATPase_NBD"/>
</dbReference>
<dbReference type="PANTHER" id="PTHR11937">
    <property type="entry name" value="ACTIN"/>
    <property type="match status" value="1"/>
</dbReference>
<dbReference type="Pfam" id="PF00022">
    <property type="entry name" value="Actin"/>
    <property type="match status" value="1"/>
</dbReference>
<dbReference type="PRINTS" id="PR00190">
    <property type="entry name" value="ACTIN"/>
</dbReference>
<dbReference type="SMART" id="SM00268">
    <property type="entry name" value="ACTIN"/>
    <property type="match status" value="1"/>
</dbReference>
<dbReference type="SUPFAM" id="SSF53067">
    <property type="entry name" value="Actin-like ATPase domain"/>
    <property type="match status" value="2"/>
</dbReference>
<dbReference type="PROSITE" id="PS00406">
    <property type="entry name" value="ACTINS_1"/>
    <property type="match status" value="1"/>
</dbReference>
<dbReference type="PROSITE" id="PS00432">
    <property type="entry name" value="ACTINS_2"/>
    <property type="match status" value="1"/>
</dbReference>
<evidence type="ECO:0000250" key="1"/>
<evidence type="ECO:0000250" key="2">
    <source>
        <dbReference type="UniProtKB" id="P68137"/>
    </source>
</evidence>
<evidence type="ECO:0000305" key="3"/>
<feature type="chain" id="PRO_0000312671" description="Actin-17">
    <location>
        <begin position="1"/>
        <end position="374"/>
    </location>
</feature>
<feature type="sequence conflict" description="In Ref. 3; AAR23116." evidence="3" ref="3">
    <original>N</original>
    <variation>K</variation>
    <location>
        <position position="13"/>
    </location>
</feature>
<feature type="sequence conflict" description="In Ref. 3; AAR23116." evidence="3" ref="3">
    <original>S</original>
    <variation>F</variation>
    <location>
        <position position="15"/>
    </location>
</feature>
<feature type="sequence conflict" description="In Ref. 3; AAR23116." evidence="3" ref="3">
    <original>I</original>
    <variation>N</variation>
    <location>
        <position position="35"/>
    </location>
</feature>
<accession>Q554S6</accession>
<accession>Q6LEI3</accession>
<accession>Q8T299</accession>
<sequence>MECGDVQALVIDNGSSISKAGFAGDDAPRAVFPSIVGRQRYRDVMVGMGQKDSYVGDEAQSKRGILNLKYPIERGIITNWDDMEKIWHHTFYNELRVAPEEHPIHLTLSPSSSKANREKMTQIMFETFSNPAMYISIQSALSLYASGLTTGIVIDSGDGVSHTVPILEGHSINHAISRLDLAGNDLTDYLGKLLSGRGYPFISIDETEIVRDIKEKLSYITLDFQNEIKIVSSALEKSYELPDGKVISIGNELFRCPEALFQPSFLGMESAGIHETTYNSIMKCDVDIRKDLYDNVVLSGGTTMFPGIADRMNKELTALAPSTMKIKIIAPPERKYSVWIGGSMLSSLSTFQQMWISKEEYDESGPSIVHRKCF</sequence>
<organism>
    <name type="scientific">Dictyostelium discoideum</name>
    <name type="common">Social amoeba</name>
    <dbReference type="NCBI Taxonomy" id="44689"/>
    <lineage>
        <taxon>Eukaryota</taxon>
        <taxon>Amoebozoa</taxon>
        <taxon>Evosea</taxon>
        <taxon>Eumycetozoa</taxon>
        <taxon>Dictyostelia</taxon>
        <taxon>Dictyosteliales</taxon>
        <taxon>Dictyosteliaceae</taxon>
        <taxon>Dictyostelium</taxon>
    </lineage>
</organism>
<proteinExistence type="inferred from homology"/>
<keyword id="KW-0067">ATP-binding</keyword>
<keyword id="KW-0963">Cytoplasm</keyword>
<keyword id="KW-0206">Cytoskeleton</keyword>
<keyword id="KW-0378">Hydrolase</keyword>
<keyword id="KW-0547">Nucleotide-binding</keyword>
<keyword id="KW-1185">Reference proteome</keyword>